<reference key="1">
    <citation type="submission" date="2005-10" db="EMBL/GenBank/DDBJ databases">
        <title>Complete sequence of Pelobacter carbinolicus DSM 2380.</title>
        <authorList>
            <person name="Copeland A."/>
            <person name="Lucas S."/>
            <person name="Lapidus A."/>
            <person name="Barry K."/>
            <person name="Detter J.C."/>
            <person name="Glavina T."/>
            <person name="Hammon N."/>
            <person name="Israni S."/>
            <person name="Pitluck S."/>
            <person name="Chertkov O."/>
            <person name="Schmutz J."/>
            <person name="Larimer F."/>
            <person name="Land M."/>
            <person name="Kyrpides N."/>
            <person name="Ivanova N."/>
            <person name="Richardson P."/>
        </authorList>
    </citation>
    <scope>NUCLEOTIDE SEQUENCE [LARGE SCALE GENOMIC DNA]</scope>
    <source>
        <strain>DSM 2380 / NBRC 103641 / GraBd1</strain>
    </source>
</reference>
<sequence>MSESIPKNIILTTLDDAINWGRKNSMWPMFFGLSCCFVEMMGSMTPRFDLARFGAEVLRGTPREADLMVIAGTPFKKMAASMLRVYEEMANPKWVIAMGSCANSGGMYDVYSVMQGVNQVLPVDVYIPGCPPRPEAFMQGLMTLQEKIARKESPARPVLNLRGGNEGTTVPILIDGSSKTRDTRGPGYGHCPIRGTAQQHPDFKGHRAAGMWGPPQPKIAFSASTAPLLEQLRERFGDDVRQEEGADMPTLVADPAQVPELLRFLKQDIDQPYERLEDLTAIDETARSQRPAHDLTMVYHLLSFERAGYLRVKAPLRNDRAEVPSITGLWPAANWYEREAFDMFGVRFAGHPDLRRILMPEGWQGHPLRKSHPSRATDMPPFTRDTATTMVPPEGSHFFSNRAPVDNQSLSILNLGPQHPGTHGILRVILQLAGEEIVDLDSEIGYHHRGAEKIAERQHWNQYIPYTDRIDYLAGSLNNLAYLYSVETLCGVEVPPRARYIRVLLSELFRIASHLVWLGTFAHDVGAMTPVFYAFDSREKIFDIIELITGGRMHPAWFRIGGVPDDLPDGWLAAVEAFTRDFEARIDEFDRLLTGGPIFRARTEGIGTVSRQQAVELGFSGPNLRATGLAWDLRKSMPYGGYDEFDFDVVTAGGGDCFARYLVRLGELRQSLRIVRQAAEGMPQGRWISDQYRYAYPKREDGLQDIESLIHHFLHVSRGPAAPRGECYRAIESSKGECGYYAVSDGGTGAYRLRIRTPSFPHLQALPQLSRGRLVADVITILGSLDYVLADLDR</sequence>
<accession>Q3A825</accession>
<keyword id="KW-0997">Cell inner membrane</keyword>
<keyword id="KW-1003">Cell membrane</keyword>
<keyword id="KW-0472">Membrane</keyword>
<keyword id="KW-0511">Multifunctional enzyme</keyword>
<keyword id="KW-0520">NAD</keyword>
<keyword id="KW-0874">Quinone</keyword>
<keyword id="KW-1185">Reference proteome</keyword>
<keyword id="KW-1278">Translocase</keyword>
<keyword id="KW-0813">Transport</keyword>
<keyword id="KW-0830">Ubiquinone</keyword>
<name>NUBCD_SYNC1</name>
<proteinExistence type="inferred from homology"/>
<comment type="function">
    <text evidence="1">NDH-1 shuttles electrons from NADH, via FMN and iron-sulfur (Fe-S) centers, to quinones in the respiratory chain. The immediate electron acceptor for the enzyme in this species is believed to be ubiquinone. Couples the redox reaction to proton translocation (for every two electrons transferred, four hydrogen ions are translocated across the cytoplasmic membrane), and thus conserves the redox energy in a proton gradient.</text>
</comment>
<comment type="catalytic activity">
    <reaction>
        <text>a quinone + NADH + 5 H(+)(in) = a quinol + NAD(+) + 4 H(+)(out)</text>
        <dbReference type="Rhea" id="RHEA:57888"/>
        <dbReference type="ChEBI" id="CHEBI:15378"/>
        <dbReference type="ChEBI" id="CHEBI:24646"/>
        <dbReference type="ChEBI" id="CHEBI:57540"/>
        <dbReference type="ChEBI" id="CHEBI:57945"/>
        <dbReference type="ChEBI" id="CHEBI:132124"/>
    </reaction>
</comment>
<comment type="subunit">
    <text evidence="1">NDH-1 is composed of about 13 different subunits. Subunits NuoBCD, E, F, and G constitute the peripheral sector of the complex (By similarity).</text>
</comment>
<comment type="subcellular location">
    <subcellularLocation>
        <location evidence="1">Cell inner membrane</location>
        <topology evidence="1">Peripheral membrane protein</topology>
        <orientation evidence="1">Cytoplasmic side</orientation>
    </subcellularLocation>
</comment>
<comment type="similarity">
    <text evidence="2">In the N-terminal section; belongs to the complex I 20 kDa subunit family.</text>
</comment>
<comment type="similarity">
    <text evidence="2">In the central section; belongs to the complex I 30 kDa subunit family.</text>
</comment>
<comment type="similarity">
    <text evidence="2">In the C-terminal section; belongs to the complex I 49 kDa subunit family.</text>
</comment>
<dbReference type="EC" id="7.1.1.-"/>
<dbReference type="EMBL" id="CP000142">
    <property type="protein sequence ID" value="ABA87467.1"/>
    <property type="molecule type" value="Genomic_DNA"/>
</dbReference>
<dbReference type="RefSeq" id="WP_011339867.1">
    <property type="nucleotide sequence ID" value="NC_007498.2"/>
</dbReference>
<dbReference type="SMR" id="Q3A825"/>
<dbReference type="STRING" id="338963.Pcar_0206"/>
<dbReference type="KEGG" id="pca:Pcar_0206"/>
<dbReference type="eggNOG" id="COG0377">
    <property type="taxonomic scope" value="Bacteria"/>
</dbReference>
<dbReference type="eggNOG" id="COG0649">
    <property type="taxonomic scope" value="Bacteria"/>
</dbReference>
<dbReference type="HOGENOM" id="CLU_015134_5_0_7"/>
<dbReference type="OrthoDB" id="9801496at2"/>
<dbReference type="Proteomes" id="UP000002534">
    <property type="component" value="Chromosome"/>
</dbReference>
<dbReference type="GO" id="GO:0005886">
    <property type="term" value="C:plasma membrane"/>
    <property type="evidence" value="ECO:0007669"/>
    <property type="project" value="UniProtKB-SubCell"/>
</dbReference>
<dbReference type="GO" id="GO:0051539">
    <property type="term" value="F:4 iron, 4 sulfur cluster binding"/>
    <property type="evidence" value="ECO:0007669"/>
    <property type="project" value="InterPro"/>
</dbReference>
<dbReference type="GO" id="GO:0005506">
    <property type="term" value="F:iron ion binding"/>
    <property type="evidence" value="ECO:0007669"/>
    <property type="project" value="UniProtKB-UniRule"/>
</dbReference>
<dbReference type="GO" id="GO:0051287">
    <property type="term" value="F:NAD binding"/>
    <property type="evidence" value="ECO:0007669"/>
    <property type="project" value="InterPro"/>
</dbReference>
<dbReference type="GO" id="GO:0008137">
    <property type="term" value="F:NADH dehydrogenase (ubiquinone) activity"/>
    <property type="evidence" value="ECO:0007669"/>
    <property type="project" value="InterPro"/>
</dbReference>
<dbReference type="GO" id="GO:0050136">
    <property type="term" value="F:NADH:ubiquinone reductase (non-electrogenic) activity"/>
    <property type="evidence" value="ECO:0007669"/>
    <property type="project" value="UniProtKB-UniRule"/>
</dbReference>
<dbReference type="GO" id="GO:0048038">
    <property type="term" value="F:quinone binding"/>
    <property type="evidence" value="ECO:0007669"/>
    <property type="project" value="UniProtKB-KW"/>
</dbReference>
<dbReference type="FunFam" id="3.40.50.12280:FF:000002">
    <property type="entry name" value="NADH-quinone oxidoreductase subunit B"/>
    <property type="match status" value="1"/>
</dbReference>
<dbReference type="Gene3D" id="3.40.50.12280">
    <property type="match status" value="1"/>
</dbReference>
<dbReference type="Gene3D" id="1.10.645.10">
    <property type="entry name" value="Cytochrome-c3 Hydrogenase, chain B"/>
    <property type="match status" value="1"/>
</dbReference>
<dbReference type="Gene3D" id="3.30.460.80">
    <property type="entry name" value="NADH:ubiquinone oxidoreductase, 30kDa subunit"/>
    <property type="match status" value="1"/>
</dbReference>
<dbReference type="HAMAP" id="MF_01356">
    <property type="entry name" value="NDH1_NuoB"/>
    <property type="match status" value="1"/>
</dbReference>
<dbReference type="HAMAP" id="MF_01357">
    <property type="entry name" value="NDH1_NuoC"/>
    <property type="match status" value="1"/>
</dbReference>
<dbReference type="HAMAP" id="MF_01358">
    <property type="entry name" value="NDH1_NuoD"/>
    <property type="match status" value="1"/>
</dbReference>
<dbReference type="InterPro" id="IPR010218">
    <property type="entry name" value="NADH_DH_suC"/>
</dbReference>
<dbReference type="InterPro" id="IPR001135">
    <property type="entry name" value="NADH_Q_OxRdtase_suD"/>
</dbReference>
<dbReference type="InterPro" id="IPR037232">
    <property type="entry name" value="NADH_quin_OxRdtase_su_C/D-like"/>
</dbReference>
<dbReference type="InterPro" id="IPR006137">
    <property type="entry name" value="NADH_UbQ_OxRdtase-like_20kDa"/>
</dbReference>
<dbReference type="InterPro" id="IPR001268">
    <property type="entry name" value="NADH_UbQ_OxRdtase_30kDa_su"/>
</dbReference>
<dbReference type="InterPro" id="IPR014029">
    <property type="entry name" value="NADH_UbQ_OxRdtase_49kDa_CS"/>
</dbReference>
<dbReference type="InterPro" id="IPR020396">
    <property type="entry name" value="NADH_UbQ_OxRdtase_CS"/>
</dbReference>
<dbReference type="InterPro" id="IPR006138">
    <property type="entry name" value="NADH_UQ_OxRdtase_20Kd_su"/>
</dbReference>
<dbReference type="InterPro" id="IPR022885">
    <property type="entry name" value="NDH1_su_D/H"/>
</dbReference>
<dbReference type="InterPro" id="IPR029014">
    <property type="entry name" value="NiFe-Hase_large"/>
</dbReference>
<dbReference type="NCBIfam" id="TIGR01957">
    <property type="entry name" value="nuoB_fam"/>
    <property type="match status" value="1"/>
</dbReference>
<dbReference type="NCBIfam" id="TIGR01961">
    <property type="entry name" value="NuoC_fam"/>
    <property type="match status" value="1"/>
</dbReference>
<dbReference type="NCBIfam" id="TIGR01962">
    <property type="entry name" value="NuoD"/>
    <property type="match status" value="1"/>
</dbReference>
<dbReference type="NCBIfam" id="NF004739">
    <property type="entry name" value="PRK06075.1"/>
    <property type="match status" value="1"/>
</dbReference>
<dbReference type="NCBIfam" id="NF005012">
    <property type="entry name" value="PRK06411.1"/>
    <property type="match status" value="1"/>
</dbReference>
<dbReference type="NCBIfam" id="NF009808">
    <property type="entry name" value="PRK13292.1"/>
    <property type="match status" value="1"/>
</dbReference>
<dbReference type="PANTHER" id="PTHR11993:SF45">
    <property type="entry name" value="NADH-QUINONE OXIDOREDUCTASE SUBUNIT C_D"/>
    <property type="match status" value="1"/>
</dbReference>
<dbReference type="PANTHER" id="PTHR11993">
    <property type="entry name" value="NADH-UBIQUINONE OXIDOREDUCTASE 49 KDA SUBUNIT"/>
    <property type="match status" value="1"/>
</dbReference>
<dbReference type="Pfam" id="PF00329">
    <property type="entry name" value="Complex1_30kDa"/>
    <property type="match status" value="1"/>
</dbReference>
<dbReference type="Pfam" id="PF00346">
    <property type="entry name" value="Complex1_49kDa"/>
    <property type="match status" value="1"/>
</dbReference>
<dbReference type="Pfam" id="PF01058">
    <property type="entry name" value="Oxidored_q6"/>
    <property type="match status" value="1"/>
</dbReference>
<dbReference type="SUPFAM" id="SSF56770">
    <property type="entry name" value="HydA/Nqo6-like"/>
    <property type="match status" value="1"/>
</dbReference>
<dbReference type="SUPFAM" id="SSF56762">
    <property type="entry name" value="HydB/Nqo4-like"/>
    <property type="match status" value="1"/>
</dbReference>
<dbReference type="SUPFAM" id="SSF143243">
    <property type="entry name" value="Nqo5-like"/>
    <property type="match status" value="1"/>
</dbReference>
<dbReference type="PROSITE" id="PS00542">
    <property type="entry name" value="COMPLEX1_30K"/>
    <property type="match status" value="1"/>
</dbReference>
<dbReference type="PROSITE" id="PS00535">
    <property type="entry name" value="COMPLEX1_49K"/>
    <property type="match status" value="1"/>
</dbReference>
<feature type="chain" id="PRO_0000358652" description="NADH-quinone oxidoreductase subunit B/C/D">
    <location>
        <begin position="1"/>
        <end position="794"/>
    </location>
</feature>
<feature type="region of interest" description="NADH dehydrogenase I subunit B" evidence="1">
    <location>
        <begin position="1"/>
        <end position="154"/>
    </location>
</feature>
<feature type="region of interest" description="NADH dehydrogenase I subunit C" evidence="1">
    <location>
        <begin position="230"/>
        <end position="383"/>
    </location>
</feature>
<feature type="region of interest" description="NADH dehydrogenase I subunit D" evidence="1">
    <location>
        <begin position="414"/>
        <end position="794"/>
    </location>
</feature>
<organism>
    <name type="scientific">Syntrophotalea carbinolica (strain DSM 2380 / NBRC 103641 / GraBd1)</name>
    <name type="common">Pelobacter carbinolicus</name>
    <dbReference type="NCBI Taxonomy" id="338963"/>
    <lineage>
        <taxon>Bacteria</taxon>
        <taxon>Pseudomonadati</taxon>
        <taxon>Thermodesulfobacteriota</taxon>
        <taxon>Desulfuromonadia</taxon>
        <taxon>Desulfuromonadales</taxon>
        <taxon>Syntrophotaleaceae</taxon>
        <taxon>Syntrophotalea</taxon>
    </lineage>
</organism>
<gene>
    <name type="primary">nuoBCD</name>
    <name type="synonym">nuoB</name>
    <name type="synonym">nuoC</name>
    <name type="synonym">nuoD</name>
    <name type="ordered locus">Pcar_0206</name>
</gene>
<protein>
    <recommendedName>
        <fullName>NADH-quinone oxidoreductase subunit B/C/D</fullName>
        <ecNumber>7.1.1.-</ecNumber>
    </recommendedName>
    <alternativeName>
        <fullName>NADH dehydrogenase I subunit B/C/D</fullName>
    </alternativeName>
    <alternativeName>
        <fullName>NDH-1 subunit B/C/D</fullName>
    </alternativeName>
</protein>
<evidence type="ECO:0000250" key="1"/>
<evidence type="ECO:0000305" key="2"/>